<evidence type="ECO:0000250" key="1"/>
<evidence type="ECO:0000250" key="2">
    <source>
        <dbReference type="UniProtKB" id="P40933"/>
    </source>
</evidence>
<evidence type="ECO:0000250" key="3">
    <source>
        <dbReference type="UniProtKB" id="P48346"/>
    </source>
</evidence>
<evidence type="ECO:0000255" key="4"/>
<evidence type="ECO:0000305" key="5"/>
<reference key="1">
    <citation type="submission" date="1999-05" db="EMBL/GenBank/DDBJ databases">
        <title>Isolation of interleukin-15 mRNA transcripts from T and B cells circulating in efferent lymph.</title>
        <authorList>
            <person name="Casey G.J."/>
            <person name="Chaplin P.J."/>
        </authorList>
    </citation>
    <scope>NUCLEOTIDE SEQUENCE [MRNA]</scope>
</reference>
<sequence>MRILKPYLRSTSIQCYLCLLLNSHFLTEAGIHVFILGCISAGLPKTEANWQSVIHDLKTIEHLIQSMHMDATLYTESDAHPNCKVTALQCFLLELRVILHESKNAAIYEIIENLTMLADRNLSSIENKTELGCKECEELEKKSIKEFLKSFVHIVQMFINTS</sequence>
<accession>Q9XSJ6</accession>
<keyword id="KW-0202">Cytokine</keyword>
<keyword id="KW-1015">Disulfide bond</keyword>
<keyword id="KW-0325">Glycoprotein</keyword>
<keyword id="KW-1185">Reference proteome</keyword>
<keyword id="KW-0964">Secreted</keyword>
<keyword id="KW-0732">Signal</keyword>
<name>IL15_SHEEP</name>
<gene>
    <name type="primary">IL15</name>
</gene>
<protein>
    <recommendedName>
        <fullName>Interleukin-15</fullName>
        <shortName>IL-15</shortName>
    </recommendedName>
</protein>
<proteinExistence type="evidence at transcript level"/>
<dbReference type="EMBL" id="AF149700">
    <property type="protein sequence ID" value="AAD37425.1"/>
    <property type="molecule type" value="mRNA"/>
</dbReference>
<dbReference type="RefSeq" id="NP_001009734.1">
    <property type="nucleotide sequence ID" value="NM_001009734.1"/>
</dbReference>
<dbReference type="SMR" id="Q9XSJ6"/>
<dbReference type="STRING" id="9940.ENSOARP00000012994"/>
<dbReference type="GlyCosmos" id="Q9XSJ6">
    <property type="glycosylation" value="3 sites, No reported glycans"/>
</dbReference>
<dbReference type="PaxDb" id="9940-ENSOARP00000012994"/>
<dbReference type="GeneID" id="443056"/>
<dbReference type="KEGG" id="oas:443056"/>
<dbReference type="CTD" id="3600"/>
<dbReference type="eggNOG" id="ENOG502SCMF">
    <property type="taxonomic scope" value="Eukaryota"/>
</dbReference>
<dbReference type="OrthoDB" id="8905762at2759"/>
<dbReference type="Proteomes" id="UP000002356">
    <property type="component" value="Unplaced"/>
</dbReference>
<dbReference type="GO" id="GO:0005615">
    <property type="term" value="C:extracellular space"/>
    <property type="evidence" value="ECO:0007669"/>
    <property type="project" value="UniProtKB-KW"/>
</dbReference>
<dbReference type="GO" id="GO:0005125">
    <property type="term" value="F:cytokine activity"/>
    <property type="evidence" value="ECO:0007669"/>
    <property type="project" value="UniProtKB-KW"/>
</dbReference>
<dbReference type="GO" id="GO:0005126">
    <property type="term" value="F:cytokine receptor binding"/>
    <property type="evidence" value="ECO:0007669"/>
    <property type="project" value="InterPro"/>
</dbReference>
<dbReference type="GO" id="GO:0006955">
    <property type="term" value="P:immune response"/>
    <property type="evidence" value="ECO:0007669"/>
    <property type="project" value="InterPro"/>
</dbReference>
<dbReference type="GO" id="GO:0035723">
    <property type="term" value="P:interleukin-15-mediated signaling pathway"/>
    <property type="evidence" value="ECO:0000250"/>
    <property type="project" value="UniProtKB"/>
</dbReference>
<dbReference type="GO" id="GO:0042119">
    <property type="term" value="P:neutrophil activation"/>
    <property type="evidence" value="ECO:0000250"/>
    <property type="project" value="UniProtKB"/>
</dbReference>
<dbReference type="GO" id="GO:0001819">
    <property type="term" value="P:positive regulation of cytokine production"/>
    <property type="evidence" value="ECO:0007669"/>
    <property type="project" value="TreeGrafter"/>
</dbReference>
<dbReference type="GO" id="GO:0050778">
    <property type="term" value="P:positive regulation of immune response"/>
    <property type="evidence" value="ECO:0007669"/>
    <property type="project" value="TreeGrafter"/>
</dbReference>
<dbReference type="GO" id="GO:0050731">
    <property type="term" value="P:positive regulation of peptidyl-tyrosine phosphorylation"/>
    <property type="evidence" value="ECO:0000250"/>
    <property type="project" value="UniProtKB"/>
</dbReference>
<dbReference type="GO" id="GO:0050766">
    <property type="term" value="P:positive regulation of phagocytosis"/>
    <property type="evidence" value="ECO:0000250"/>
    <property type="project" value="UniProtKB"/>
</dbReference>
<dbReference type="GO" id="GO:0042102">
    <property type="term" value="P:positive regulation of T cell proliferation"/>
    <property type="evidence" value="ECO:0007669"/>
    <property type="project" value="TreeGrafter"/>
</dbReference>
<dbReference type="FunFam" id="1.20.1250.70:FF:000001">
    <property type="entry name" value="Interleukin"/>
    <property type="match status" value="1"/>
</dbReference>
<dbReference type="Gene3D" id="1.20.1250.70">
    <property type="entry name" value="Interleukin-15/Interleukin-21"/>
    <property type="match status" value="1"/>
</dbReference>
<dbReference type="InterPro" id="IPR009079">
    <property type="entry name" value="4_helix_cytokine-like_core"/>
</dbReference>
<dbReference type="InterPro" id="IPR020439">
    <property type="entry name" value="IL-15"/>
</dbReference>
<dbReference type="InterPro" id="IPR003443">
    <property type="entry name" value="IL-15/IL-21_fam"/>
</dbReference>
<dbReference type="InterPro" id="IPR020466">
    <property type="entry name" value="IL-15_mml"/>
</dbReference>
<dbReference type="PANTHER" id="PTHR14356:SF3">
    <property type="entry name" value="INTERLEUKIN-15"/>
    <property type="match status" value="1"/>
</dbReference>
<dbReference type="PANTHER" id="PTHR14356">
    <property type="entry name" value="INTERLEUKIN-15-RELATED"/>
    <property type="match status" value="1"/>
</dbReference>
<dbReference type="Pfam" id="PF02372">
    <property type="entry name" value="IL15"/>
    <property type="match status" value="1"/>
</dbReference>
<dbReference type="PRINTS" id="PR01947">
    <property type="entry name" value="INTLKN15MAML"/>
</dbReference>
<dbReference type="PRINTS" id="PR01930">
    <property type="entry name" value="INTRLEUKIN15"/>
</dbReference>
<dbReference type="SUPFAM" id="SSF47266">
    <property type="entry name" value="4-helical cytokines"/>
    <property type="match status" value="1"/>
</dbReference>
<comment type="function">
    <text evidence="2 3">Cytokine that plays a major role in the development of inflammatory and protective immune responses to microbial invaders and parasites by modulating immune cells of both the innate and adaptive immune systems. Stimulates the proliferation of natural killer cells, T-cells and B-cells and promotes the secretion of several cytokines. In monocytes, induces the production of IL8 and monocyte chemotactic protein 1/CCL2, two chemokines that attract neutrophils and monocytes respectively to sites of infection. Unlike most cytokines, which are secreted in soluble form, IL15 is expressed in association with its high affinity IL15RA on the surface of IL15-producing cells and delivers signals to target cells that express IL2RB and IL2RG receptor subunits. Binding to its receptor triggers the phosphorylation of JAK1 and JAK3 and the recruitment and subsequent phosphorylation of signal transducer and activator of transcription-3/STAT3 and STAT5 (By similarity). In mast cells, induces the rapid tyrosine phosphorylation of STAT6 and thereby controls mast cell survival and release of cytokines such as IL4 (By similarity).</text>
</comment>
<comment type="subcellular location">
    <subcellularLocation>
        <location>Secreted</location>
    </subcellularLocation>
</comment>
<comment type="similarity">
    <text evidence="5">Belongs to the IL-15/IL-21 family.</text>
</comment>
<feature type="signal peptide" evidence="4">
    <location>
        <begin position="1"/>
        <end position="29"/>
    </location>
</feature>
<feature type="propeptide" id="PRO_0000015405" evidence="4">
    <location>
        <begin position="30"/>
        <end position="48"/>
    </location>
</feature>
<feature type="chain" id="PRO_0000015406" description="Interleukin-15">
    <location>
        <begin position="49"/>
        <end position="162"/>
    </location>
</feature>
<feature type="glycosylation site" description="N-linked (GlcNAc...) asparagine" evidence="4">
    <location>
        <position position="113"/>
    </location>
</feature>
<feature type="glycosylation site" description="N-linked (GlcNAc...) asparagine" evidence="4">
    <location>
        <position position="121"/>
    </location>
</feature>
<feature type="glycosylation site" description="N-linked (GlcNAc...) asparagine" evidence="4">
    <location>
        <position position="127"/>
    </location>
</feature>
<feature type="disulfide bond" evidence="1">
    <location>
        <begin position="83"/>
        <end position="133"/>
    </location>
</feature>
<feature type="disulfide bond" evidence="1">
    <location>
        <begin position="90"/>
        <end position="136"/>
    </location>
</feature>
<organism>
    <name type="scientific">Ovis aries</name>
    <name type="common">Sheep</name>
    <dbReference type="NCBI Taxonomy" id="9940"/>
    <lineage>
        <taxon>Eukaryota</taxon>
        <taxon>Metazoa</taxon>
        <taxon>Chordata</taxon>
        <taxon>Craniata</taxon>
        <taxon>Vertebrata</taxon>
        <taxon>Euteleostomi</taxon>
        <taxon>Mammalia</taxon>
        <taxon>Eutheria</taxon>
        <taxon>Laurasiatheria</taxon>
        <taxon>Artiodactyla</taxon>
        <taxon>Ruminantia</taxon>
        <taxon>Pecora</taxon>
        <taxon>Bovidae</taxon>
        <taxon>Caprinae</taxon>
        <taxon>Ovis</taxon>
    </lineage>
</organism>